<feature type="chain" id="PRO_1000007765" description="5'-nucleotidase SurE">
    <location>
        <begin position="1"/>
        <end position="269"/>
    </location>
</feature>
<feature type="binding site" evidence="1">
    <location>
        <position position="11"/>
    </location>
    <ligand>
        <name>a divalent metal cation</name>
        <dbReference type="ChEBI" id="CHEBI:60240"/>
    </ligand>
</feature>
<feature type="binding site" evidence="1">
    <location>
        <position position="12"/>
    </location>
    <ligand>
        <name>a divalent metal cation</name>
        <dbReference type="ChEBI" id="CHEBI:60240"/>
    </ligand>
</feature>
<feature type="binding site" evidence="1">
    <location>
        <position position="43"/>
    </location>
    <ligand>
        <name>a divalent metal cation</name>
        <dbReference type="ChEBI" id="CHEBI:60240"/>
    </ligand>
</feature>
<feature type="binding site" evidence="1">
    <location>
        <position position="101"/>
    </location>
    <ligand>
        <name>a divalent metal cation</name>
        <dbReference type="ChEBI" id="CHEBI:60240"/>
    </ligand>
</feature>
<accession>A2BSJ2</accession>
<proteinExistence type="inferred from homology"/>
<protein>
    <recommendedName>
        <fullName evidence="1">5'-nucleotidase SurE</fullName>
        <ecNumber evidence="1">3.1.3.5</ecNumber>
    </recommendedName>
    <alternativeName>
        <fullName evidence="1">Nucleoside 5'-monophosphate phosphohydrolase</fullName>
    </alternativeName>
</protein>
<comment type="function">
    <text evidence="1">Nucleotidase that shows phosphatase activity on nucleoside 5'-monophosphates.</text>
</comment>
<comment type="catalytic activity">
    <reaction evidence="1">
        <text>a ribonucleoside 5'-phosphate + H2O = a ribonucleoside + phosphate</text>
        <dbReference type="Rhea" id="RHEA:12484"/>
        <dbReference type="ChEBI" id="CHEBI:15377"/>
        <dbReference type="ChEBI" id="CHEBI:18254"/>
        <dbReference type="ChEBI" id="CHEBI:43474"/>
        <dbReference type="ChEBI" id="CHEBI:58043"/>
        <dbReference type="EC" id="3.1.3.5"/>
    </reaction>
</comment>
<comment type="cofactor">
    <cofactor evidence="1">
        <name>a divalent metal cation</name>
        <dbReference type="ChEBI" id="CHEBI:60240"/>
    </cofactor>
    <text evidence="1">Binds 1 divalent metal cation per subunit.</text>
</comment>
<comment type="subcellular location">
    <subcellularLocation>
        <location evidence="1">Cytoplasm</location>
    </subcellularLocation>
</comment>
<comment type="similarity">
    <text evidence="1">Belongs to the SurE nucleotidase family.</text>
</comment>
<reference key="1">
    <citation type="journal article" date="2007" name="PLoS Genet.">
        <title>Patterns and implications of gene gain and loss in the evolution of Prochlorococcus.</title>
        <authorList>
            <person name="Kettler G.C."/>
            <person name="Martiny A.C."/>
            <person name="Huang K."/>
            <person name="Zucker J."/>
            <person name="Coleman M.L."/>
            <person name="Rodrigue S."/>
            <person name="Chen F."/>
            <person name="Lapidus A."/>
            <person name="Ferriera S."/>
            <person name="Johnson J."/>
            <person name="Steglich C."/>
            <person name="Church G.M."/>
            <person name="Richardson P."/>
            <person name="Chisholm S.W."/>
        </authorList>
    </citation>
    <scope>NUCLEOTIDE SEQUENCE [LARGE SCALE GENOMIC DNA]</scope>
    <source>
        <strain>AS9601</strain>
    </source>
</reference>
<gene>
    <name evidence="1" type="primary">surE</name>
    <name type="ordered locus">A9601_14701</name>
</gene>
<name>SURE_PROMS</name>
<evidence type="ECO:0000255" key="1">
    <source>
        <dbReference type="HAMAP-Rule" id="MF_00060"/>
    </source>
</evidence>
<organism>
    <name type="scientific">Prochlorococcus marinus (strain AS9601)</name>
    <dbReference type="NCBI Taxonomy" id="146891"/>
    <lineage>
        <taxon>Bacteria</taxon>
        <taxon>Bacillati</taxon>
        <taxon>Cyanobacteriota</taxon>
        <taxon>Cyanophyceae</taxon>
        <taxon>Synechococcales</taxon>
        <taxon>Prochlorococcaceae</taxon>
        <taxon>Prochlorococcus</taxon>
    </lineage>
</organism>
<keyword id="KW-0963">Cytoplasm</keyword>
<keyword id="KW-0378">Hydrolase</keyword>
<keyword id="KW-0479">Metal-binding</keyword>
<keyword id="KW-0547">Nucleotide-binding</keyword>
<sequence length="269" mass="29437">MKPLNILISNDDGVFAAGIRALAKSAQKRGHKVKVVCPDQERSATGHGLTLQSPLRVEKADELFGEGIEAWGCSGTPADCVKLALSELLDNKPDLILSGINHGPNLGTDIFCSGTVAAAMEGTLENVPSMAISVASFKWKNFEAAGEIAMNIAEQAINDSWPASLLLNLNIPPCDKSKIKELSWTRLSVRKYKNQFSKREDPRGDDYYWLAGEVVLDLKSKGYGPKNWPSDVSQIQDNKISLTPVEPDLFWRGDLENLPKINNSFINPS</sequence>
<dbReference type="EC" id="3.1.3.5" evidence="1"/>
<dbReference type="EMBL" id="CP000551">
    <property type="protein sequence ID" value="ABM70753.1"/>
    <property type="molecule type" value="Genomic_DNA"/>
</dbReference>
<dbReference type="RefSeq" id="WP_011818890.1">
    <property type="nucleotide sequence ID" value="NC_008816.1"/>
</dbReference>
<dbReference type="SMR" id="A2BSJ2"/>
<dbReference type="STRING" id="146891.A9601_14701"/>
<dbReference type="KEGG" id="pmb:A9601_14701"/>
<dbReference type="eggNOG" id="COG0496">
    <property type="taxonomic scope" value="Bacteria"/>
</dbReference>
<dbReference type="HOGENOM" id="CLU_045192_1_3_3"/>
<dbReference type="OrthoDB" id="9780815at2"/>
<dbReference type="Proteomes" id="UP000002590">
    <property type="component" value="Chromosome"/>
</dbReference>
<dbReference type="GO" id="GO:0005737">
    <property type="term" value="C:cytoplasm"/>
    <property type="evidence" value="ECO:0007669"/>
    <property type="project" value="UniProtKB-SubCell"/>
</dbReference>
<dbReference type="GO" id="GO:0008254">
    <property type="term" value="F:3'-nucleotidase activity"/>
    <property type="evidence" value="ECO:0007669"/>
    <property type="project" value="TreeGrafter"/>
</dbReference>
<dbReference type="GO" id="GO:0008253">
    <property type="term" value="F:5'-nucleotidase activity"/>
    <property type="evidence" value="ECO:0007669"/>
    <property type="project" value="UniProtKB-UniRule"/>
</dbReference>
<dbReference type="GO" id="GO:0004309">
    <property type="term" value="F:exopolyphosphatase activity"/>
    <property type="evidence" value="ECO:0007669"/>
    <property type="project" value="TreeGrafter"/>
</dbReference>
<dbReference type="GO" id="GO:0046872">
    <property type="term" value="F:metal ion binding"/>
    <property type="evidence" value="ECO:0007669"/>
    <property type="project" value="UniProtKB-UniRule"/>
</dbReference>
<dbReference type="GO" id="GO:0000166">
    <property type="term" value="F:nucleotide binding"/>
    <property type="evidence" value="ECO:0007669"/>
    <property type="project" value="UniProtKB-KW"/>
</dbReference>
<dbReference type="Gene3D" id="3.40.1210.10">
    <property type="entry name" value="Survival protein SurE-like phosphatase/nucleotidase"/>
    <property type="match status" value="1"/>
</dbReference>
<dbReference type="HAMAP" id="MF_00060">
    <property type="entry name" value="SurE"/>
    <property type="match status" value="1"/>
</dbReference>
<dbReference type="InterPro" id="IPR030048">
    <property type="entry name" value="SurE"/>
</dbReference>
<dbReference type="InterPro" id="IPR002828">
    <property type="entry name" value="SurE-like_Pase/nucleotidase"/>
</dbReference>
<dbReference type="InterPro" id="IPR036523">
    <property type="entry name" value="SurE-like_sf"/>
</dbReference>
<dbReference type="NCBIfam" id="NF001490">
    <property type="entry name" value="PRK00346.1-4"/>
    <property type="match status" value="1"/>
</dbReference>
<dbReference type="NCBIfam" id="NF001492">
    <property type="entry name" value="PRK00346.2-2"/>
    <property type="match status" value="1"/>
</dbReference>
<dbReference type="NCBIfam" id="TIGR00087">
    <property type="entry name" value="surE"/>
    <property type="match status" value="1"/>
</dbReference>
<dbReference type="PANTHER" id="PTHR30457">
    <property type="entry name" value="5'-NUCLEOTIDASE SURE"/>
    <property type="match status" value="1"/>
</dbReference>
<dbReference type="PANTHER" id="PTHR30457:SF12">
    <property type="entry name" value="5'_3'-NUCLEOTIDASE SURE"/>
    <property type="match status" value="1"/>
</dbReference>
<dbReference type="Pfam" id="PF01975">
    <property type="entry name" value="SurE"/>
    <property type="match status" value="1"/>
</dbReference>
<dbReference type="SUPFAM" id="SSF64167">
    <property type="entry name" value="SurE-like"/>
    <property type="match status" value="1"/>
</dbReference>